<protein>
    <recommendedName>
        <fullName evidence="1">Acetylglutamate kinase</fullName>
        <ecNumber evidence="1">2.7.2.8</ecNumber>
    </recommendedName>
    <alternativeName>
        <fullName evidence="1">N-acetyl-L-glutamate 5-phosphotransferase</fullName>
    </alternativeName>
    <alternativeName>
        <fullName evidence="1">NAG kinase</fullName>
        <shortName evidence="1">NAGK</shortName>
    </alternativeName>
</protein>
<accession>A4J169</accession>
<gene>
    <name evidence="1" type="primary">argB</name>
    <name type="ordered locus">Dred_0273</name>
</gene>
<feature type="chain" id="PRO_1000071217" description="Acetylglutamate kinase">
    <location>
        <begin position="1"/>
        <end position="287"/>
    </location>
</feature>
<feature type="binding site" evidence="1">
    <location>
        <begin position="64"/>
        <end position="65"/>
    </location>
    <ligand>
        <name>substrate</name>
    </ligand>
</feature>
<feature type="binding site" evidence="1">
    <location>
        <position position="86"/>
    </location>
    <ligand>
        <name>substrate</name>
    </ligand>
</feature>
<feature type="binding site" evidence="1">
    <location>
        <position position="181"/>
    </location>
    <ligand>
        <name>substrate</name>
    </ligand>
</feature>
<feature type="site" description="Transition state stabilizer" evidence="1">
    <location>
        <position position="29"/>
    </location>
</feature>
<feature type="site" description="Transition state stabilizer" evidence="1">
    <location>
        <position position="244"/>
    </location>
</feature>
<name>ARGB_DESRM</name>
<keyword id="KW-0028">Amino-acid biosynthesis</keyword>
<keyword id="KW-0055">Arginine biosynthesis</keyword>
<keyword id="KW-0067">ATP-binding</keyword>
<keyword id="KW-0963">Cytoplasm</keyword>
<keyword id="KW-0418">Kinase</keyword>
<keyword id="KW-0547">Nucleotide-binding</keyword>
<keyword id="KW-1185">Reference proteome</keyword>
<keyword id="KW-0808">Transferase</keyword>
<sequence length="287" mass="30548">MISPLEKAGILVEALPYIKKFSGKTIVIKYGGHAMLNADLKKAVMTDLVLMKFVGINPVVVHGGGPEITGMLHRLGIESQFVSGLRVTDAPTMEVVEMVLGKLNKEIVALINGLGGRSVGLSGKDANLIMANKKYSNDCQDIGFVGEVTGVNPQLLQTVIQEGYIPVVSPVGISTEGETYNINADTVASAIATALKADKLIILTDVEGILEDRQDKGTLISTVKMEDIPRLIERGVIQGGMIPKVECCMQAIQTGVATTHILDGRVPHSILLEVFTDKGIGTMVVSD</sequence>
<proteinExistence type="inferred from homology"/>
<organism>
    <name type="scientific">Desulforamulus reducens (strain ATCC BAA-1160 / DSM 100696 / MI-1)</name>
    <name type="common">Desulfotomaculum reducens</name>
    <dbReference type="NCBI Taxonomy" id="349161"/>
    <lineage>
        <taxon>Bacteria</taxon>
        <taxon>Bacillati</taxon>
        <taxon>Bacillota</taxon>
        <taxon>Clostridia</taxon>
        <taxon>Eubacteriales</taxon>
        <taxon>Peptococcaceae</taxon>
        <taxon>Desulforamulus</taxon>
    </lineage>
</organism>
<dbReference type="EC" id="2.7.2.8" evidence="1"/>
<dbReference type="EMBL" id="CP000612">
    <property type="protein sequence ID" value="ABO48822.1"/>
    <property type="molecule type" value="Genomic_DNA"/>
</dbReference>
<dbReference type="RefSeq" id="WP_011876660.1">
    <property type="nucleotide sequence ID" value="NC_009253.1"/>
</dbReference>
<dbReference type="SMR" id="A4J169"/>
<dbReference type="STRING" id="349161.Dred_0273"/>
<dbReference type="KEGG" id="drm:Dred_0273"/>
<dbReference type="eggNOG" id="COG0548">
    <property type="taxonomic scope" value="Bacteria"/>
</dbReference>
<dbReference type="HOGENOM" id="CLU_053680_0_0_9"/>
<dbReference type="OrthoDB" id="9803155at2"/>
<dbReference type="UniPathway" id="UPA00068">
    <property type="reaction ID" value="UER00107"/>
</dbReference>
<dbReference type="Proteomes" id="UP000001556">
    <property type="component" value="Chromosome"/>
</dbReference>
<dbReference type="GO" id="GO:0005737">
    <property type="term" value="C:cytoplasm"/>
    <property type="evidence" value="ECO:0007669"/>
    <property type="project" value="UniProtKB-SubCell"/>
</dbReference>
<dbReference type="GO" id="GO:0003991">
    <property type="term" value="F:acetylglutamate kinase activity"/>
    <property type="evidence" value="ECO:0007669"/>
    <property type="project" value="UniProtKB-UniRule"/>
</dbReference>
<dbReference type="GO" id="GO:0005524">
    <property type="term" value="F:ATP binding"/>
    <property type="evidence" value="ECO:0007669"/>
    <property type="project" value="UniProtKB-UniRule"/>
</dbReference>
<dbReference type="GO" id="GO:0042450">
    <property type="term" value="P:arginine biosynthetic process via ornithine"/>
    <property type="evidence" value="ECO:0007669"/>
    <property type="project" value="UniProtKB-UniRule"/>
</dbReference>
<dbReference type="GO" id="GO:0006526">
    <property type="term" value="P:L-arginine biosynthetic process"/>
    <property type="evidence" value="ECO:0007669"/>
    <property type="project" value="UniProtKB-UniPathway"/>
</dbReference>
<dbReference type="CDD" id="cd04250">
    <property type="entry name" value="AAK_NAGK-C"/>
    <property type="match status" value="1"/>
</dbReference>
<dbReference type="FunFam" id="3.40.1160.10:FF:000004">
    <property type="entry name" value="Acetylglutamate kinase"/>
    <property type="match status" value="1"/>
</dbReference>
<dbReference type="Gene3D" id="3.40.1160.10">
    <property type="entry name" value="Acetylglutamate kinase-like"/>
    <property type="match status" value="1"/>
</dbReference>
<dbReference type="HAMAP" id="MF_00082">
    <property type="entry name" value="ArgB"/>
    <property type="match status" value="1"/>
</dbReference>
<dbReference type="InterPro" id="IPR036393">
    <property type="entry name" value="AceGlu_kinase-like_sf"/>
</dbReference>
<dbReference type="InterPro" id="IPR004662">
    <property type="entry name" value="AcgluKinase_fam"/>
</dbReference>
<dbReference type="InterPro" id="IPR037528">
    <property type="entry name" value="ArgB"/>
</dbReference>
<dbReference type="InterPro" id="IPR001048">
    <property type="entry name" value="Asp/Glu/Uridylate_kinase"/>
</dbReference>
<dbReference type="InterPro" id="IPR001057">
    <property type="entry name" value="Glu/AcGlu_kinase"/>
</dbReference>
<dbReference type="InterPro" id="IPR041727">
    <property type="entry name" value="NAGK-C"/>
</dbReference>
<dbReference type="NCBIfam" id="TIGR00761">
    <property type="entry name" value="argB"/>
    <property type="match status" value="1"/>
</dbReference>
<dbReference type="PANTHER" id="PTHR23342">
    <property type="entry name" value="N-ACETYLGLUTAMATE SYNTHASE"/>
    <property type="match status" value="1"/>
</dbReference>
<dbReference type="PANTHER" id="PTHR23342:SF0">
    <property type="entry name" value="N-ACETYLGLUTAMATE SYNTHASE, MITOCHONDRIAL"/>
    <property type="match status" value="1"/>
</dbReference>
<dbReference type="Pfam" id="PF00696">
    <property type="entry name" value="AA_kinase"/>
    <property type="match status" value="1"/>
</dbReference>
<dbReference type="PIRSF" id="PIRSF000728">
    <property type="entry name" value="NAGK"/>
    <property type="match status" value="1"/>
</dbReference>
<dbReference type="PRINTS" id="PR00474">
    <property type="entry name" value="GLU5KINASE"/>
</dbReference>
<dbReference type="SUPFAM" id="SSF53633">
    <property type="entry name" value="Carbamate kinase-like"/>
    <property type="match status" value="1"/>
</dbReference>
<comment type="function">
    <text evidence="1">Catalyzes the ATP-dependent phosphorylation of N-acetyl-L-glutamate.</text>
</comment>
<comment type="catalytic activity">
    <reaction evidence="1">
        <text>N-acetyl-L-glutamate + ATP = N-acetyl-L-glutamyl 5-phosphate + ADP</text>
        <dbReference type="Rhea" id="RHEA:14629"/>
        <dbReference type="ChEBI" id="CHEBI:30616"/>
        <dbReference type="ChEBI" id="CHEBI:44337"/>
        <dbReference type="ChEBI" id="CHEBI:57936"/>
        <dbReference type="ChEBI" id="CHEBI:456216"/>
        <dbReference type="EC" id="2.7.2.8"/>
    </reaction>
</comment>
<comment type="pathway">
    <text evidence="1">Amino-acid biosynthesis; L-arginine biosynthesis; N(2)-acetyl-L-ornithine from L-glutamate: step 2/4.</text>
</comment>
<comment type="subcellular location">
    <subcellularLocation>
        <location evidence="1">Cytoplasm</location>
    </subcellularLocation>
</comment>
<comment type="similarity">
    <text evidence="1">Belongs to the acetylglutamate kinase family. ArgB subfamily.</text>
</comment>
<evidence type="ECO:0000255" key="1">
    <source>
        <dbReference type="HAMAP-Rule" id="MF_00082"/>
    </source>
</evidence>
<reference key="1">
    <citation type="submission" date="2007-03" db="EMBL/GenBank/DDBJ databases">
        <title>Complete sequence of Desulfotomaculum reducens MI-1.</title>
        <authorList>
            <consortium name="US DOE Joint Genome Institute"/>
            <person name="Copeland A."/>
            <person name="Lucas S."/>
            <person name="Lapidus A."/>
            <person name="Barry K."/>
            <person name="Detter J.C."/>
            <person name="Glavina del Rio T."/>
            <person name="Hammon N."/>
            <person name="Israni S."/>
            <person name="Dalin E."/>
            <person name="Tice H."/>
            <person name="Pitluck S."/>
            <person name="Sims D."/>
            <person name="Brettin T."/>
            <person name="Bruce D."/>
            <person name="Han C."/>
            <person name="Tapia R."/>
            <person name="Schmutz J."/>
            <person name="Larimer F."/>
            <person name="Land M."/>
            <person name="Hauser L."/>
            <person name="Kyrpides N."/>
            <person name="Kim E."/>
            <person name="Tebo B.M."/>
            <person name="Richardson P."/>
        </authorList>
    </citation>
    <scope>NUCLEOTIDE SEQUENCE [LARGE SCALE GENOMIC DNA]</scope>
    <source>
        <strain>ATCC BAA-1160 / DSM 100696 / MI-1</strain>
    </source>
</reference>